<feature type="chain" id="PRO_0000067451" description="Squalene synthase">
    <location>
        <begin position="1"/>
        <end position="460"/>
    </location>
</feature>
<feature type="transmembrane region" description="Helical" evidence="2">
    <location>
        <begin position="425"/>
        <end position="445"/>
    </location>
</feature>
<sequence>MSLANRIEEIRCLCQYKLWNDLPSYGEDENVPQNIRRCYQLLDMTSRSFAVVIKELPNGIREAVMIFYLVLRGLDTVEDDMTLPLDKKLPILRDFYKTIEVEGWTFNESGPNEKDRQLLVEFDVVIKEYLNLSEGYRNVISNITKEMGDGMAYYASLAEKNDGFSVETIEDFNKYCHYVAGLVGIGLSRLFAQSKLEDPDLAHSQAISNSLGLFLQKVNIIRDYREDFDDNRHFWPREIWSKYTSSFGDLCLPDNSEKALECLSDMTANALTHATDALVYLSQLKTQEIFNFCAIPQVMAIATLAAVFRNPDVFQTNVKIRKGQAVQIILHSVNLKNVCDLFLRYTRDIHYKNTPKDPNFLKISIECGKIEQVSESLFPRRFREMYEKAYVSKLSEQKKGNGTQKAILNDEQKELYRKDLQKLGISILFVFFIILVCLAVIFYVFNIRIHWSDFKELNLF</sequence>
<organism>
    <name type="scientific">Schizosaccharomyces pombe (strain 972 / ATCC 24843)</name>
    <name type="common">Fission yeast</name>
    <dbReference type="NCBI Taxonomy" id="284812"/>
    <lineage>
        <taxon>Eukaryota</taxon>
        <taxon>Fungi</taxon>
        <taxon>Dikarya</taxon>
        <taxon>Ascomycota</taxon>
        <taxon>Taphrinomycotina</taxon>
        <taxon>Schizosaccharomycetes</taxon>
        <taxon>Schizosaccharomycetales</taxon>
        <taxon>Schizosaccharomycetaceae</taxon>
        <taxon>Schizosaccharomyces</taxon>
    </lineage>
</organism>
<name>ERG9_SCHPO</name>
<protein>
    <recommendedName>
        <fullName evidence="7">Squalene synthase</fullName>
        <shortName evidence="7">SQS</shortName>
        <shortName evidence="7">SS</shortName>
        <ecNumber evidence="10">2.5.1.21</ecNumber>
    </recommendedName>
    <alternativeName>
        <fullName evidence="7">FPP:FPP farnesyltransferase</fullName>
    </alternativeName>
    <alternativeName>
        <fullName evidence="7">Farnesyl-diphosphate farnesyltransferase</fullName>
    </alternativeName>
</protein>
<comment type="function">
    <text evidence="5 9 11">Squalene synthase; part of the third module of ergosterol biosynthesis pathway that includes by the late steps of the pathway (PubMed:8474436). Erg9 produces squalene from 2 farnesyl pyrophosphate moieties (PubMed:8474436). The third module or late pathway involves the ergosterol synthesis itself through consecutive reactions that mainly occur in the endoplasmic reticulum (ER) membrane. Firstly, the squalene synthase erg9 catalyzes the condensation of 2 farnesyl pyrophosphate moieties to form squalene, which is the precursor of all steroids. Secondly, squalene is converted into lanosterol by the consecutive action of the squalene epoxidase erg1 and the lanosterol synthase erg7. The lanosterol 14-alpha-demethylase erg11/cyp1 catalyzes C14-demethylation of lanosterol to produce 4,4'-dimethyl cholesta-8,14,24-triene-3-beta-ol. In the next steps, a complex process involving various demethylation, reduction and desaturation reactions catalyzed by the C-14 reductase erg24 and the C-4 demethylation complex erg25-erg26-erg27 leads to the production of zymosterol. Erg28 likely functions in the C-4 demethylation complex reaction by tethering erg26 and Erg27 to the endoplasmic reticulum or to facilitate interaction between these proteins. Then, the sterol 24-C-methyltransferase erg6 catalyzes the methyl transfer from S-adenosyl-methionine to the C-24 of zymosterol to form fecosterol. The C-8 sterol isomerase erg2 catalyzes the reaction which results in unsaturation at C-7 in the B ring of sterols and thus converts fecosterol to episterol. The sterol-C5-desaturases erg31 and erg32 then catalyze the introduction of a C-5 double bond in the B ring to produce 5-dehydroepisterol. The C-22 sterol desaturase erg5 further converts 5-dehydroepisterol into ergosta-5,7,22,24(28)-tetraen-3beta-ol by forming the C-22(23) double bond in the sterol side chain. Finally, ergosta-5,7,22,24(28)-tetraen-3beta-ol is substrate of the C-24(28) sterol reductase erg4 to produce ergosterol (Probable) (PubMed:18310029). In the genus Schizosaccharomyces, a second route exists between lanosterol and fecosterol, via the methylation of lanosterol to eburicol by erg6, followed by C14-demethylation by erg11/cyp1 and C4-demethylation by the demethylation complex erg25-erg26-erg27 (Probable) (PubMed:8586261).</text>
</comment>
<comment type="catalytic activity">
    <reaction evidence="10">
        <text>2 (2E,6E)-farnesyl diphosphate + NADPH + H(+) = squalene + 2 diphosphate + NADP(+)</text>
        <dbReference type="Rhea" id="RHEA:32295"/>
        <dbReference type="ChEBI" id="CHEBI:15378"/>
        <dbReference type="ChEBI" id="CHEBI:15440"/>
        <dbReference type="ChEBI" id="CHEBI:33019"/>
        <dbReference type="ChEBI" id="CHEBI:57783"/>
        <dbReference type="ChEBI" id="CHEBI:58349"/>
        <dbReference type="ChEBI" id="CHEBI:175763"/>
        <dbReference type="EC" id="2.5.1.21"/>
    </reaction>
    <physiologicalReaction direction="left-to-right" evidence="10">
        <dbReference type="Rhea" id="RHEA:32296"/>
    </physiologicalReaction>
</comment>
<comment type="catalytic activity">
    <reaction evidence="10">
        <text>2 (2E,6E)-farnesyl diphosphate + NADH + H(+) = squalene + 2 diphosphate + NAD(+)</text>
        <dbReference type="Rhea" id="RHEA:32299"/>
        <dbReference type="ChEBI" id="CHEBI:15378"/>
        <dbReference type="ChEBI" id="CHEBI:15440"/>
        <dbReference type="ChEBI" id="CHEBI:33019"/>
        <dbReference type="ChEBI" id="CHEBI:57540"/>
        <dbReference type="ChEBI" id="CHEBI:57945"/>
        <dbReference type="ChEBI" id="CHEBI:175763"/>
        <dbReference type="EC" id="2.5.1.21"/>
    </reaction>
    <physiologicalReaction direction="left-to-right" evidence="10">
        <dbReference type="Rhea" id="RHEA:32300"/>
    </physiologicalReaction>
</comment>
<comment type="cofactor">
    <cofactor evidence="1">
        <name>Mg(2+)</name>
        <dbReference type="ChEBI" id="CHEBI:18420"/>
    </cofactor>
</comment>
<comment type="pathway">
    <text evidence="5">Terpene metabolism; lanosterol biosynthesis; lanosterol from farnesyl diphosphate: step 1/3.</text>
</comment>
<comment type="pathway">
    <text evidence="5">Steroid metabolism; ergosterol biosynthesis.</text>
</comment>
<comment type="subunit">
    <text evidence="4">Interacts with pof14.</text>
</comment>
<comment type="interaction">
    <interactant intactId="EBI-1794119">
        <id>P36596</id>
    </interactant>
    <interactant intactId="EBI-1793014">
        <id>Q10223</id>
        <label>pof14</label>
    </interactant>
    <organismsDiffer>false</organismsDiffer>
    <experiments>5</experiments>
</comment>
<comment type="subcellular location">
    <subcellularLocation>
        <location evidence="3 4">Endoplasmic reticulum membrane</location>
        <topology evidence="3 4">Single-pass membrane protein</topology>
    </subcellularLocation>
</comment>
<comment type="miscellaneous">
    <text evidence="6">In Aspergillus, the biosynthesis pathway of the sterol precursors leading to the prevalent sterol ergosterol differs from yeast. The ringsystem of lanosterol in S.cerevisiae is firstly demethylised in three enzymatic steps leading to the intermediate zymosterol and secondly a methyl group is added to zymosterol by the sterol 24-C-methyltransferase to form fecosterol. In Aspergillus, lanosterol is firstly transmethylated by the sterol 24-C-methyltransferase leading to the intermediate eburicol and secondly demethylated in three steps to form fecosterol. In the genus Schizosaccharomyces, 2 routes exist from lanosterol to erposterol: the classical one via zymosterol and the second one via the formation of eburicol followed by demethylation.</text>
</comment>
<comment type="similarity">
    <text evidence="8">Belongs to the phytoene/squalene synthase family.</text>
</comment>
<reference key="1">
    <citation type="journal article" date="1993" name="Mol. Cell. Biol.">
        <title>Conservation between human and fungal squalene synthetases: similarities in structure, function, and regulation.</title>
        <authorList>
            <person name="Robinson G.W."/>
            <person name="Tsay Y.H."/>
            <person name="Kienzle B.K."/>
            <person name="Smith-Monroy C.A."/>
            <person name="Bishop R.W."/>
        </authorList>
    </citation>
    <scope>NUCLEOTIDE SEQUENCE [MRNA]</scope>
    <scope>FUNCTION</scope>
    <scope>PATHWAY</scope>
    <source>
        <strain>972 / ATCC 24843</strain>
    </source>
</reference>
<reference key="2">
    <citation type="journal article" date="2002" name="Nature">
        <title>The genome sequence of Schizosaccharomyces pombe.</title>
        <authorList>
            <person name="Wood V."/>
            <person name="Gwilliam R."/>
            <person name="Rajandream M.A."/>
            <person name="Lyne M.H."/>
            <person name="Lyne R."/>
            <person name="Stewart A."/>
            <person name="Sgouros J.G."/>
            <person name="Peat N."/>
            <person name="Hayles J."/>
            <person name="Baker S.G."/>
            <person name="Basham D."/>
            <person name="Bowman S."/>
            <person name="Brooks K."/>
            <person name="Brown D."/>
            <person name="Brown S."/>
            <person name="Chillingworth T."/>
            <person name="Churcher C.M."/>
            <person name="Collins M."/>
            <person name="Connor R."/>
            <person name="Cronin A."/>
            <person name="Davis P."/>
            <person name="Feltwell T."/>
            <person name="Fraser A."/>
            <person name="Gentles S."/>
            <person name="Goble A."/>
            <person name="Hamlin N."/>
            <person name="Harris D.E."/>
            <person name="Hidalgo J."/>
            <person name="Hodgson G."/>
            <person name="Holroyd S."/>
            <person name="Hornsby T."/>
            <person name="Howarth S."/>
            <person name="Huckle E.J."/>
            <person name="Hunt S."/>
            <person name="Jagels K."/>
            <person name="James K.D."/>
            <person name="Jones L."/>
            <person name="Jones M."/>
            <person name="Leather S."/>
            <person name="McDonald S."/>
            <person name="McLean J."/>
            <person name="Mooney P."/>
            <person name="Moule S."/>
            <person name="Mungall K.L."/>
            <person name="Murphy L.D."/>
            <person name="Niblett D."/>
            <person name="Odell C."/>
            <person name="Oliver K."/>
            <person name="O'Neil S."/>
            <person name="Pearson D."/>
            <person name="Quail M.A."/>
            <person name="Rabbinowitsch E."/>
            <person name="Rutherford K.M."/>
            <person name="Rutter S."/>
            <person name="Saunders D."/>
            <person name="Seeger K."/>
            <person name="Sharp S."/>
            <person name="Skelton J."/>
            <person name="Simmonds M.N."/>
            <person name="Squares R."/>
            <person name="Squares S."/>
            <person name="Stevens K."/>
            <person name="Taylor K."/>
            <person name="Taylor R.G."/>
            <person name="Tivey A."/>
            <person name="Walsh S.V."/>
            <person name="Warren T."/>
            <person name="Whitehead S."/>
            <person name="Woodward J.R."/>
            <person name="Volckaert G."/>
            <person name="Aert R."/>
            <person name="Robben J."/>
            <person name="Grymonprez B."/>
            <person name="Weltjens I."/>
            <person name="Vanstreels E."/>
            <person name="Rieger M."/>
            <person name="Schaefer M."/>
            <person name="Mueller-Auer S."/>
            <person name="Gabel C."/>
            <person name="Fuchs M."/>
            <person name="Duesterhoeft A."/>
            <person name="Fritzc C."/>
            <person name="Holzer E."/>
            <person name="Moestl D."/>
            <person name="Hilbert H."/>
            <person name="Borzym K."/>
            <person name="Langer I."/>
            <person name="Beck A."/>
            <person name="Lehrach H."/>
            <person name="Reinhardt R."/>
            <person name="Pohl T.M."/>
            <person name="Eger P."/>
            <person name="Zimmermann W."/>
            <person name="Wedler H."/>
            <person name="Wambutt R."/>
            <person name="Purnelle B."/>
            <person name="Goffeau A."/>
            <person name="Cadieu E."/>
            <person name="Dreano S."/>
            <person name="Gloux S."/>
            <person name="Lelaure V."/>
            <person name="Mottier S."/>
            <person name="Galibert F."/>
            <person name="Aves S.J."/>
            <person name="Xiang Z."/>
            <person name="Hunt C."/>
            <person name="Moore K."/>
            <person name="Hurst S.M."/>
            <person name="Lucas M."/>
            <person name="Rochet M."/>
            <person name="Gaillardin C."/>
            <person name="Tallada V.A."/>
            <person name="Garzon A."/>
            <person name="Thode G."/>
            <person name="Daga R.R."/>
            <person name="Cruzado L."/>
            <person name="Jimenez J."/>
            <person name="Sanchez M."/>
            <person name="del Rey F."/>
            <person name="Benito J."/>
            <person name="Dominguez A."/>
            <person name="Revuelta J.L."/>
            <person name="Moreno S."/>
            <person name="Armstrong J."/>
            <person name="Forsburg S.L."/>
            <person name="Cerutti L."/>
            <person name="Lowe T."/>
            <person name="McCombie W.R."/>
            <person name="Paulsen I."/>
            <person name="Potashkin J."/>
            <person name="Shpakovski G.V."/>
            <person name="Ussery D."/>
            <person name="Barrell B.G."/>
            <person name="Nurse P."/>
        </authorList>
    </citation>
    <scope>NUCLEOTIDE SEQUENCE [LARGE SCALE GENOMIC DNA]</scope>
    <source>
        <strain>972 / ATCC 24843</strain>
    </source>
</reference>
<reference key="3">
    <citation type="journal article" date="1995" name="FEMS Microbiol. Lett.">
        <title>Identification of 24-methylene-24,25-dihydrolanosterol as a precursor of ergosterol in the yeasts Schizosaccharomyces pombe and Schizosaccharomyces octosporus.</title>
        <authorList>
            <person name="Harmouch N."/>
            <person name="Coulon J."/>
            <person name="Bonaly R."/>
        </authorList>
    </citation>
    <scope>FUNCTION</scope>
</reference>
<reference key="4">
    <citation type="journal article" date="2006" name="EMBO J.">
        <title>Repression of ergosterol level during oxidative stress by fission yeast F-box protein Pof14 independently of SCF.</title>
        <authorList>
            <person name="Tafforeau L."/>
            <person name="Le Blastier S."/>
            <person name="Bamps S."/>
            <person name="Dewez M."/>
            <person name="Vandenhaute J."/>
            <person name="Hermand D."/>
        </authorList>
    </citation>
    <scope>SUBCELLULAR LOCATION</scope>
    <scope>INTERACTION WITH POF14</scope>
</reference>
<reference key="5">
    <citation type="journal article" date="2006" name="Nat. Biotechnol.">
        <title>ORFeome cloning and global analysis of protein localization in the fission yeast Schizosaccharomyces pombe.</title>
        <authorList>
            <person name="Matsuyama A."/>
            <person name="Arai R."/>
            <person name="Yashiroda Y."/>
            <person name="Shirai A."/>
            <person name="Kamata A."/>
            <person name="Sekido S."/>
            <person name="Kobayashi Y."/>
            <person name="Hashimoto A."/>
            <person name="Hamamoto M."/>
            <person name="Hiraoka Y."/>
            <person name="Horinouchi S."/>
            <person name="Yoshida M."/>
        </authorList>
    </citation>
    <scope>SUBCELLULAR LOCATION [LARGE SCALE ANALYSIS]</scope>
</reference>
<reference key="6">
    <citation type="journal article" date="2008" name="Microbiology">
        <title>Multiple functions of ergosterol in the fission yeast Schizosaccharomyces pombe.</title>
        <authorList>
            <person name="Iwaki T."/>
            <person name="Iefuji H."/>
            <person name="Hiraga Y."/>
            <person name="Hosomi A."/>
            <person name="Morita T."/>
            <person name="Giga-Hama Y."/>
            <person name="Takegawa K."/>
        </authorList>
    </citation>
    <scope>FUNCTION</scope>
</reference>
<dbReference type="EC" id="2.5.1.21" evidence="10"/>
<dbReference type="EMBL" id="L06071">
    <property type="protein sequence ID" value="AAA35343.1"/>
    <property type="molecule type" value="mRNA"/>
</dbReference>
<dbReference type="EMBL" id="CU329671">
    <property type="protein sequence ID" value="CAA22809.1"/>
    <property type="molecule type" value="Genomic_DNA"/>
</dbReference>
<dbReference type="PIR" id="B48057">
    <property type="entry name" value="B48057"/>
</dbReference>
<dbReference type="PIR" id="T40581">
    <property type="entry name" value="T40581"/>
</dbReference>
<dbReference type="RefSeq" id="NP_595363.1">
    <property type="nucleotide sequence ID" value="NM_001021271.2"/>
</dbReference>
<dbReference type="SMR" id="P36596"/>
<dbReference type="BioGRID" id="277625">
    <property type="interactions" value="6"/>
</dbReference>
<dbReference type="FunCoup" id="P36596">
    <property type="interactions" value="260"/>
</dbReference>
<dbReference type="IntAct" id="P36596">
    <property type="interactions" value="3"/>
</dbReference>
<dbReference type="MINT" id="P36596"/>
<dbReference type="STRING" id="284812.P36596"/>
<dbReference type="iPTMnet" id="P36596"/>
<dbReference type="PaxDb" id="4896-SPBC646.05c.1"/>
<dbReference type="EnsemblFungi" id="SPBC646.05c.1">
    <property type="protein sequence ID" value="SPBC646.05c.1:pep"/>
    <property type="gene ID" value="SPBC646.05c"/>
</dbReference>
<dbReference type="GeneID" id="2541110"/>
<dbReference type="KEGG" id="spo:2541110"/>
<dbReference type="PomBase" id="SPBC646.05c">
    <property type="gene designation" value="erg9"/>
</dbReference>
<dbReference type="VEuPathDB" id="FungiDB:SPBC646.05c"/>
<dbReference type="eggNOG" id="KOG1459">
    <property type="taxonomic scope" value="Eukaryota"/>
</dbReference>
<dbReference type="HOGENOM" id="CLU_031981_2_1_1"/>
<dbReference type="InParanoid" id="P36596"/>
<dbReference type="OMA" id="GEACQLM"/>
<dbReference type="PhylomeDB" id="P36596"/>
<dbReference type="Reactome" id="R-SPO-191273">
    <property type="pathway name" value="Cholesterol biosynthesis"/>
</dbReference>
<dbReference type="UniPathway" id="UPA00767">
    <property type="reaction ID" value="UER00751"/>
</dbReference>
<dbReference type="UniPathway" id="UPA00768"/>
<dbReference type="PRO" id="PR:P36596"/>
<dbReference type="Proteomes" id="UP000002485">
    <property type="component" value="Chromosome II"/>
</dbReference>
<dbReference type="GO" id="GO:0005783">
    <property type="term" value="C:endoplasmic reticulum"/>
    <property type="evidence" value="ECO:0000316"/>
    <property type="project" value="PomBase"/>
</dbReference>
<dbReference type="GO" id="GO:0005789">
    <property type="term" value="C:endoplasmic reticulum membrane"/>
    <property type="evidence" value="ECO:0000314"/>
    <property type="project" value="PomBase"/>
</dbReference>
<dbReference type="GO" id="GO:0042175">
    <property type="term" value="C:nuclear outer membrane-endoplasmic reticulum membrane network"/>
    <property type="evidence" value="ECO:0000314"/>
    <property type="project" value="PomBase"/>
</dbReference>
<dbReference type="GO" id="GO:0051996">
    <property type="term" value="F:squalene synthase [NAD(P)H] activity"/>
    <property type="evidence" value="ECO:0000318"/>
    <property type="project" value="GO_Central"/>
</dbReference>
<dbReference type="GO" id="GO:0006696">
    <property type="term" value="P:ergosterol biosynthetic process"/>
    <property type="evidence" value="ECO:0000318"/>
    <property type="project" value="GO_Central"/>
</dbReference>
<dbReference type="GO" id="GO:0045338">
    <property type="term" value="P:farnesyl diphosphate metabolic process"/>
    <property type="evidence" value="ECO:0000318"/>
    <property type="project" value="GO_Central"/>
</dbReference>
<dbReference type="GO" id="GO:1902767">
    <property type="term" value="P:isoprenoid biosynthetic process via mevalonate"/>
    <property type="evidence" value="ECO:0000316"/>
    <property type="project" value="PomBase"/>
</dbReference>
<dbReference type="CDD" id="cd00683">
    <property type="entry name" value="Trans_IPPS_HH"/>
    <property type="match status" value="1"/>
</dbReference>
<dbReference type="FunFam" id="1.10.600.10:FF:000003">
    <property type="entry name" value="Farnesyl-diphosphate farnesyltransferase 1"/>
    <property type="match status" value="1"/>
</dbReference>
<dbReference type="Gene3D" id="1.10.600.10">
    <property type="entry name" value="Farnesyl Diphosphate Synthase"/>
    <property type="match status" value="1"/>
</dbReference>
<dbReference type="InterPro" id="IPR008949">
    <property type="entry name" value="Isoprenoid_synthase_dom_sf"/>
</dbReference>
<dbReference type="InterPro" id="IPR002060">
    <property type="entry name" value="Squ/phyt_synthse"/>
</dbReference>
<dbReference type="InterPro" id="IPR006449">
    <property type="entry name" value="Squal_synth-like"/>
</dbReference>
<dbReference type="InterPro" id="IPR019845">
    <property type="entry name" value="Squalene/phytoene_synthase_CS"/>
</dbReference>
<dbReference type="InterPro" id="IPR044844">
    <property type="entry name" value="Trans_IPPS_euk-type"/>
</dbReference>
<dbReference type="InterPro" id="IPR033904">
    <property type="entry name" value="Trans_IPPS_HH"/>
</dbReference>
<dbReference type="NCBIfam" id="TIGR01559">
    <property type="entry name" value="squal_synth"/>
    <property type="match status" value="1"/>
</dbReference>
<dbReference type="PANTHER" id="PTHR11626">
    <property type="entry name" value="FARNESYL-DIPHOSPHATE FARNESYLTRANSFERASE"/>
    <property type="match status" value="1"/>
</dbReference>
<dbReference type="PANTHER" id="PTHR11626:SF2">
    <property type="entry name" value="SQUALENE SYNTHASE"/>
    <property type="match status" value="1"/>
</dbReference>
<dbReference type="Pfam" id="PF00494">
    <property type="entry name" value="SQS_PSY"/>
    <property type="match status" value="1"/>
</dbReference>
<dbReference type="SFLD" id="SFLDS00005">
    <property type="entry name" value="Isoprenoid_Synthase_Type_I"/>
    <property type="match status" value="1"/>
</dbReference>
<dbReference type="SFLD" id="SFLDG01018">
    <property type="entry name" value="Squalene/Phytoene_Synthase_Lik"/>
    <property type="match status" value="1"/>
</dbReference>
<dbReference type="SUPFAM" id="SSF48576">
    <property type="entry name" value="Terpenoid synthases"/>
    <property type="match status" value="1"/>
</dbReference>
<dbReference type="PROSITE" id="PS01044">
    <property type="entry name" value="SQUALEN_PHYTOEN_SYN_1"/>
    <property type="match status" value="1"/>
</dbReference>
<dbReference type="PROSITE" id="PS01045">
    <property type="entry name" value="SQUALEN_PHYTOEN_SYN_2"/>
    <property type="match status" value="1"/>
</dbReference>
<gene>
    <name evidence="7" type="primary">erg9</name>
    <name type="ORF">SPBC646.05c</name>
</gene>
<keyword id="KW-0256">Endoplasmic reticulum</keyword>
<keyword id="KW-0414">Isoprene biosynthesis</keyword>
<keyword id="KW-0444">Lipid biosynthesis</keyword>
<keyword id="KW-0443">Lipid metabolism</keyword>
<keyword id="KW-0460">Magnesium</keyword>
<keyword id="KW-0472">Membrane</keyword>
<keyword id="KW-0511">Multifunctional enzyme</keyword>
<keyword id="KW-0521">NADP</keyword>
<keyword id="KW-1185">Reference proteome</keyword>
<keyword id="KW-0752">Steroid biosynthesis</keyword>
<keyword id="KW-0753">Steroid metabolism</keyword>
<keyword id="KW-0756">Sterol biosynthesis</keyword>
<keyword id="KW-1207">Sterol metabolism</keyword>
<keyword id="KW-0808">Transferase</keyword>
<keyword id="KW-0812">Transmembrane</keyword>
<keyword id="KW-1133">Transmembrane helix</keyword>
<evidence type="ECO:0000250" key="1">
    <source>
        <dbReference type="UniProtKB" id="P29704"/>
    </source>
</evidence>
<evidence type="ECO:0000255" key="2"/>
<evidence type="ECO:0000269" key="3">
    <source>
    </source>
</evidence>
<evidence type="ECO:0000269" key="4">
    <source>
    </source>
</evidence>
<evidence type="ECO:0000269" key="5">
    <source>
    </source>
</evidence>
<evidence type="ECO:0000269" key="6">
    <source>
    </source>
</evidence>
<evidence type="ECO:0000303" key="7">
    <source>
    </source>
</evidence>
<evidence type="ECO:0000305" key="8"/>
<evidence type="ECO:0000305" key="9">
    <source>
    </source>
</evidence>
<evidence type="ECO:0000305" key="10">
    <source>
    </source>
</evidence>
<evidence type="ECO:0000305" key="11">
    <source>
    </source>
</evidence>
<accession>P36596</accession>
<proteinExistence type="evidence at protein level"/>